<evidence type="ECO:0000255" key="1">
    <source>
        <dbReference type="HAMAP-Rule" id="MF_00362"/>
    </source>
</evidence>
<evidence type="ECO:0000305" key="2"/>
<feature type="chain" id="PRO_1000005584" description="Large ribosomal subunit protein uL10">
    <location>
        <begin position="1"/>
        <end position="174"/>
    </location>
</feature>
<keyword id="KW-1185">Reference proteome</keyword>
<keyword id="KW-0687">Ribonucleoprotein</keyword>
<keyword id="KW-0689">Ribosomal protein</keyword>
<keyword id="KW-0694">RNA-binding</keyword>
<keyword id="KW-0699">rRNA-binding</keyword>
<comment type="function">
    <text evidence="1">Forms part of the ribosomal stalk, playing a central role in the interaction of the ribosome with GTP-bound translation factors.</text>
</comment>
<comment type="subunit">
    <text evidence="1">Part of the ribosomal stalk of the 50S ribosomal subunit. The N-terminus interacts with L11 and the large rRNA to form the base of the stalk. The C-terminus forms an elongated spine to which L12 dimers bind in a sequential fashion forming a multimeric L10(L12)X complex.</text>
</comment>
<comment type="similarity">
    <text evidence="1">Belongs to the universal ribosomal protein uL10 family.</text>
</comment>
<name>RL10_RUBXD</name>
<dbReference type="EMBL" id="CP000386">
    <property type="protein sequence ID" value="ABG05108.1"/>
    <property type="molecule type" value="Genomic_DNA"/>
</dbReference>
<dbReference type="RefSeq" id="WP_011565123.1">
    <property type="nucleotide sequence ID" value="NC_008148.1"/>
</dbReference>
<dbReference type="SMR" id="Q1AU20"/>
<dbReference type="STRING" id="266117.Rxyl_2164"/>
<dbReference type="KEGG" id="rxy:Rxyl_2164"/>
<dbReference type="eggNOG" id="COG0244">
    <property type="taxonomic scope" value="Bacteria"/>
</dbReference>
<dbReference type="HOGENOM" id="CLU_092227_0_0_11"/>
<dbReference type="OrthoDB" id="3186107at2"/>
<dbReference type="PhylomeDB" id="Q1AU20"/>
<dbReference type="Proteomes" id="UP000006637">
    <property type="component" value="Chromosome"/>
</dbReference>
<dbReference type="GO" id="GO:1990904">
    <property type="term" value="C:ribonucleoprotein complex"/>
    <property type="evidence" value="ECO:0007669"/>
    <property type="project" value="UniProtKB-KW"/>
</dbReference>
<dbReference type="GO" id="GO:0005840">
    <property type="term" value="C:ribosome"/>
    <property type="evidence" value="ECO:0007669"/>
    <property type="project" value="UniProtKB-KW"/>
</dbReference>
<dbReference type="GO" id="GO:0070180">
    <property type="term" value="F:large ribosomal subunit rRNA binding"/>
    <property type="evidence" value="ECO:0007669"/>
    <property type="project" value="UniProtKB-UniRule"/>
</dbReference>
<dbReference type="GO" id="GO:0006412">
    <property type="term" value="P:translation"/>
    <property type="evidence" value="ECO:0007669"/>
    <property type="project" value="UniProtKB-UniRule"/>
</dbReference>
<dbReference type="CDD" id="cd05797">
    <property type="entry name" value="Ribosomal_L10"/>
    <property type="match status" value="1"/>
</dbReference>
<dbReference type="Gene3D" id="3.30.70.1730">
    <property type="match status" value="1"/>
</dbReference>
<dbReference type="Gene3D" id="6.10.250.290">
    <property type="match status" value="1"/>
</dbReference>
<dbReference type="HAMAP" id="MF_00362">
    <property type="entry name" value="Ribosomal_uL10"/>
    <property type="match status" value="1"/>
</dbReference>
<dbReference type="InterPro" id="IPR001790">
    <property type="entry name" value="Ribosomal_uL10"/>
</dbReference>
<dbReference type="InterPro" id="IPR043141">
    <property type="entry name" value="Ribosomal_uL10-like_sf"/>
</dbReference>
<dbReference type="InterPro" id="IPR022973">
    <property type="entry name" value="Ribosomal_uL10_bac"/>
</dbReference>
<dbReference type="InterPro" id="IPR047865">
    <property type="entry name" value="Ribosomal_uL10_bac_type"/>
</dbReference>
<dbReference type="NCBIfam" id="NF000955">
    <property type="entry name" value="PRK00099.1-1"/>
    <property type="match status" value="1"/>
</dbReference>
<dbReference type="PANTHER" id="PTHR11560">
    <property type="entry name" value="39S RIBOSOMAL PROTEIN L10, MITOCHONDRIAL"/>
    <property type="match status" value="1"/>
</dbReference>
<dbReference type="Pfam" id="PF00466">
    <property type="entry name" value="Ribosomal_L10"/>
    <property type="match status" value="1"/>
</dbReference>
<dbReference type="SUPFAM" id="SSF160369">
    <property type="entry name" value="Ribosomal protein L10-like"/>
    <property type="match status" value="1"/>
</dbReference>
<gene>
    <name evidence="1" type="primary">rplJ</name>
    <name type="ordered locus">Rxyl_2164</name>
</gene>
<organism>
    <name type="scientific">Rubrobacter xylanophilus (strain DSM 9941 / JCM 11954 / NBRC 16129 / PRD-1)</name>
    <dbReference type="NCBI Taxonomy" id="266117"/>
    <lineage>
        <taxon>Bacteria</taxon>
        <taxon>Bacillati</taxon>
        <taxon>Actinomycetota</taxon>
        <taxon>Rubrobacteria</taxon>
        <taxon>Rubrobacterales</taxon>
        <taxon>Rubrobacteraceae</taxon>
        <taxon>Rubrobacter</taxon>
    </lineage>
</organism>
<accession>Q1AU20</accession>
<reference key="1">
    <citation type="submission" date="2006-06" db="EMBL/GenBank/DDBJ databases">
        <title>Complete sequence of Rubrobacter xylanophilus DSM 9941.</title>
        <authorList>
            <consortium name="US DOE Joint Genome Institute"/>
            <person name="Copeland A."/>
            <person name="Lucas S."/>
            <person name="Lapidus A."/>
            <person name="Barry K."/>
            <person name="Detter J.C."/>
            <person name="Glavina del Rio T."/>
            <person name="Hammon N."/>
            <person name="Israni S."/>
            <person name="Dalin E."/>
            <person name="Tice H."/>
            <person name="Pitluck S."/>
            <person name="Munk A.C."/>
            <person name="Brettin T."/>
            <person name="Bruce D."/>
            <person name="Han C."/>
            <person name="Tapia R."/>
            <person name="Gilna P."/>
            <person name="Schmutz J."/>
            <person name="Larimer F."/>
            <person name="Land M."/>
            <person name="Hauser L."/>
            <person name="Kyrpides N."/>
            <person name="Lykidis A."/>
            <person name="da Costa M.S."/>
            <person name="Rainey F.A."/>
            <person name="Empadinhas N."/>
            <person name="Jolivet E."/>
            <person name="Battista J.R."/>
            <person name="Richardson P."/>
        </authorList>
    </citation>
    <scope>NUCLEOTIDE SEQUENCE [LARGE SCALE GENOMIC DNA]</scope>
    <source>
        <strain>DSM 9941 / JCM 11954 / NBRC 16129 / PRD-1</strain>
    </source>
</reference>
<proteinExistence type="inferred from homology"/>
<sequence length="174" mass="18700">MKREQKAQIIEELAGKLRENSVVLVDYQGMDVAQSTELRRRSREAGVDFVVAKNTLTLRAAEEAGLPSLTEFLVGPTALAFSRDPVAAAKLMAEYADEIETFRLKGGLLEGSRVLNEQEVEALSKLPGRDQLIAQVVGGMAAPISGLVSVLNNTIQGLVVALGQIAEQKQAQQA</sequence>
<protein>
    <recommendedName>
        <fullName evidence="1">Large ribosomal subunit protein uL10</fullName>
    </recommendedName>
    <alternativeName>
        <fullName evidence="2">50S ribosomal protein L10</fullName>
    </alternativeName>
</protein>